<keyword id="KW-0067">ATP-binding</keyword>
<keyword id="KW-0238">DNA-binding</keyword>
<keyword id="KW-0479">Metal-binding</keyword>
<keyword id="KW-0547">Nucleotide-binding</keyword>
<keyword id="KW-1185">Reference proteome</keyword>
<keyword id="KW-0678">Repressor</keyword>
<keyword id="KW-0804">Transcription</keyword>
<keyword id="KW-0805">Transcription regulation</keyword>
<keyword id="KW-0862">Zinc</keyword>
<keyword id="KW-0863">Zinc-finger</keyword>
<name>NRDR_PARDP</name>
<dbReference type="EMBL" id="CP000489">
    <property type="protein sequence ID" value="ABL69662.1"/>
    <property type="molecule type" value="Genomic_DNA"/>
</dbReference>
<dbReference type="RefSeq" id="WP_011747880.1">
    <property type="nucleotide sequence ID" value="NC_008686.1"/>
</dbReference>
<dbReference type="SMR" id="A1B2B8"/>
<dbReference type="STRING" id="318586.Pden_1562"/>
<dbReference type="EnsemblBacteria" id="ABL69662">
    <property type="protein sequence ID" value="ABL69662"/>
    <property type="gene ID" value="Pden_1562"/>
</dbReference>
<dbReference type="GeneID" id="93449734"/>
<dbReference type="KEGG" id="pde:Pden_1562"/>
<dbReference type="eggNOG" id="COG1327">
    <property type="taxonomic scope" value="Bacteria"/>
</dbReference>
<dbReference type="HOGENOM" id="CLU_108412_0_1_5"/>
<dbReference type="OrthoDB" id="9807461at2"/>
<dbReference type="Proteomes" id="UP000000361">
    <property type="component" value="Chromosome 1"/>
</dbReference>
<dbReference type="GO" id="GO:0005524">
    <property type="term" value="F:ATP binding"/>
    <property type="evidence" value="ECO:0007669"/>
    <property type="project" value="UniProtKB-KW"/>
</dbReference>
<dbReference type="GO" id="GO:0003677">
    <property type="term" value="F:DNA binding"/>
    <property type="evidence" value="ECO:0007669"/>
    <property type="project" value="UniProtKB-KW"/>
</dbReference>
<dbReference type="GO" id="GO:0008270">
    <property type="term" value="F:zinc ion binding"/>
    <property type="evidence" value="ECO:0007669"/>
    <property type="project" value="UniProtKB-UniRule"/>
</dbReference>
<dbReference type="GO" id="GO:0045892">
    <property type="term" value="P:negative regulation of DNA-templated transcription"/>
    <property type="evidence" value="ECO:0007669"/>
    <property type="project" value="UniProtKB-UniRule"/>
</dbReference>
<dbReference type="HAMAP" id="MF_00440">
    <property type="entry name" value="NrdR"/>
    <property type="match status" value="1"/>
</dbReference>
<dbReference type="InterPro" id="IPR005144">
    <property type="entry name" value="ATP-cone_dom"/>
</dbReference>
<dbReference type="InterPro" id="IPR055173">
    <property type="entry name" value="NrdR-like_N"/>
</dbReference>
<dbReference type="InterPro" id="IPR003796">
    <property type="entry name" value="RNR_NrdR-like"/>
</dbReference>
<dbReference type="NCBIfam" id="TIGR00244">
    <property type="entry name" value="transcriptional regulator NrdR"/>
    <property type="match status" value="1"/>
</dbReference>
<dbReference type="PANTHER" id="PTHR30455">
    <property type="entry name" value="TRANSCRIPTIONAL REPRESSOR NRDR"/>
    <property type="match status" value="1"/>
</dbReference>
<dbReference type="PANTHER" id="PTHR30455:SF2">
    <property type="entry name" value="TRANSCRIPTIONAL REPRESSOR NRDR"/>
    <property type="match status" value="1"/>
</dbReference>
<dbReference type="Pfam" id="PF03477">
    <property type="entry name" value="ATP-cone"/>
    <property type="match status" value="1"/>
</dbReference>
<dbReference type="Pfam" id="PF22811">
    <property type="entry name" value="Zn_ribbon_NrdR"/>
    <property type="match status" value="1"/>
</dbReference>
<dbReference type="PROSITE" id="PS51161">
    <property type="entry name" value="ATP_CONE"/>
    <property type="match status" value="1"/>
</dbReference>
<feature type="chain" id="PRO_1000080787" description="Transcriptional repressor NrdR">
    <location>
        <begin position="1"/>
        <end position="154"/>
    </location>
</feature>
<feature type="domain" description="ATP-cone" evidence="1">
    <location>
        <begin position="49"/>
        <end position="139"/>
    </location>
</feature>
<feature type="zinc finger region" evidence="1">
    <location>
        <begin position="3"/>
        <end position="34"/>
    </location>
</feature>
<gene>
    <name evidence="1" type="primary">nrdR</name>
    <name type="ordered locus">Pden_1562</name>
</gene>
<sequence>MRCPFCGNVDTQVKDSRPAEDNVAIRRRRFCPACGGRFTTYERVQLRDLVVVKSSGRREDFDRTKLERSIRIAMQKRPIEPERIDQMISGIVRRLESMGDTDIPSKVIGEIVMETLARIDTVAYVRFASVYKNFQAADDFDKFVSELRPGLVEE</sequence>
<protein>
    <recommendedName>
        <fullName evidence="1">Transcriptional repressor NrdR</fullName>
    </recommendedName>
</protein>
<accession>A1B2B8</accession>
<reference key="1">
    <citation type="submission" date="2006-12" db="EMBL/GenBank/DDBJ databases">
        <title>Complete sequence of chromosome 1 of Paracoccus denitrificans PD1222.</title>
        <authorList>
            <person name="Copeland A."/>
            <person name="Lucas S."/>
            <person name="Lapidus A."/>
            <person name="Barry K."/>
            <person name="Detter J.C."/>
            <person name="Glavina del Rio T."/>
            <person name="Hammon N."/>
            <person name="Israni S."/>
            <person name="Dalin E."/>
            <person name="Tice H."/>
            <person name="Pitluck S."/>
            <person name="Munk A.C."/>
            <person name="Brettin T."/>
            <person name="Bruce D."/>
            <person name="Han C."/>
            <person name="Tapia R."/>
            <person name="Gilna P."/>
            <person name="Schmutz J."/>
            <person name="Larimer F."/>
            <person name="Land M."/>
            <person name="Hauser L."/>
            <person name="Kyrpides N."/>
            <person name="Lykidis A."/>
            <person name="Spiro S."/>
            <person name="Richardson D.J."/>
            <person name="Moir J.W.B."/>
            <person name="Ferguson S.J."/>
            <person name="van Spanning R.J.M."/>
            <person name="Richardson P."/>
        </authorList>
    </citation>
    <scope>NUCLEOTIDE SEQUENCE [LARGE SCALE GENOMIC DNA]</scope>
    <source>
        <strain>Pd 1222</strain>
    </source>
</reference>
<comment type="function">
    <text evidence="1">Negatively regulates transcription of bacterial ribonucleotide reductase nrd genes and operons by binding to NrdR-boxes.</text>
</comment>
<comment type="cofactor">
    <cofactor evidence="1">
        <name>Zn(2+)</name>
        <dbReference type="ChEBI" id="CHEBI:29105"/>
    </cofactor>
    <text evidence="1">Binds 1 zinc ion.</text>
</comment>
<comment type="similarity">
    <text evidence="1">Belongs to the NrdR family.</text>
</comment>
<evidence type="ECO:0000255" key="1">
    <source>
        <dbReference type="HAMAP-Rule" id="MF_00440"/>
    </source>
</evidence>
<organism>
    <name type="scientific">Paracoccus denitrificans (strain Pd 1222)</name>
    <dbReference type="NCBI Taxonomy" id="318586"/>
    <lineage>
        <taxon>Bacteria</taxon>
        <taxon>Pseudomonadati</taxon>
        <taxon>Pseudomonadota</taxon>
        <taxon>Alphaproteobacteria</taxon>
        <taxon>Rhodobacterales</taxon>
        <taxon>Paracoccaceae</taxon>
        <taxon>Paracoccus</taxon>
    </lineage>
</organism>
<proteinExistence type="inferred from homology"/>